<protein>
    <recommendedName>
        <fullName evidence="1">Alginate lyase</fullName>
        <ecNumber evidence="1">4.2.2.3</ecNumber>
    </recommendedName>
    <alternativeName>
        <fullName evidence="1">Poly(beta-D-mannuronate) lyase</fullName>
    </alternativeName>
</protein>
<name>ALGL_PSEP7</name>
<gene>
    <name evidence="1" type="primary">algL</name>
    <name type="ordered locus">PSPA7_1598</name>
</gene>
<comment type="function">
    <text evidence="1">Catalyzes the depolymerization of alginate by cleaving the beta-1,4 glycosidic bond between two adjacent sugar residues via a beta-elimination mechanism. May serve to degrade mislocalized alginate that is trapped in the periplasmic space.</text>
</comment>
<comment type="catalytic activity">
    <reaction evidence="1">
        <text>Eliminative cleavage of alginate to give oligosaccharides with 4-deoxy-alpha-L-erythro-hex-4-enuronosyl groups at their non-reducing ends and beta-D-mannuronate at their reducing end.</text>
        <dbReference type="EC" id="4.2.2.3"/>
    </reaction>
</comment>
<comment type="subcellular location">
    <subcellularLocation>
        <location evidence="1">Periplasm</location>
    </subcellularLocation>
</comment>
<comment type="similarity">
    <text evidence="1">Belongs to the polysaccharide lyase 5 family.</text>
</comment>
<feature type="signal peptide" evidence="1">
    <location>
        <begin position="1"/>
        <end position="27"/>
    </location>
</feature>
<feature type="chain" id="PRO_1000061109" description="Alginate lyase">
    <location>
        <begin position="28"/>
        <end position="367"/>
    </location>
</feature>
<feature type="binding site" evidence="1">
    <location>
        <begin position="65"/>
        <end position="66"/>
    </location>
    <ligand>
        <name>substrate</name>
    </ligand>
</feature>
<feature type="binding site" evidence="1">
    <location>
        <begin position="138"/>
        <end position="139"/>
    </location>
    <ligand>
        <name>substrate</name>
    </ligand>
</feature>
<feature type="binding site" evidence="1">
    <location>
        <position position="256"/>
    </location>
    <ligand>
        <name>substrate</name>
    </ligand>
</feature>
<keyword id="KW-0456">Lyase</keyword>
<keyword id="KW-0574">Periplasm</keyword>
<keyword id="KW-0732">Signal</keyword>
<accession>A6V1P7</accession>
<sequence>MKTSHLIRITLPGALAAALLASQVSQAADLVPPPGYYAAVGERKGSAGSCPSVPPPYTGSLVFTSKYEGSDSARATLNAKAEKAFRSQIKDITDMERGATKLVTQYMRSGRDGDLVCALNWMSAWARAGALQSDDFNHTGKSMRKWALGSLSGAYMRLKFSSSRPLSAHAGQSREIEDWFARLGTQVVRDWSNLPLKKINNHSYWAAWSVMSTAVVTNRRDLFDWAVSEFKVAANQVDEQGFLPNELKRRQRALAYHNYALPPLAMIAAFAQVNGVDLRQENHGALQRLAERVMNGVDDEETFEEKTGEDQDMTDLKVDNKYAWLEPYCALYRCAPKMLEAKKDREPFNSFRLGGEVTRVFSREGGS</sequence>
<evidence type="ECO:0000255" key="1">
    <source>
        <dbReference type="HAMAP-Rule" id="MF_00557"/>
    </source>
</evidence>
<proteinExistence type="inferred from homology"/>
<reference key="1">
    <citation type="submission" date="2007-06" db="EMBL/GenBank/DDBJ databases">
        <authorList>
            <person name="Dodson R.J."/>
            <person name="Harkins D."/>
            <person name="Paulsen I.T."/>
        </authorList>
    </citation>
    <scope>NUCLEOTIDE SEQUENCE [LARGE SCALE GENOMIC DNA]</scope>
    <source>
        <strain>DSM 24068 / PA7</strain>
    </source>
</reference>
<dbReference type="EC" id="4.2.2.3" evidence="1"/>
<dbReference type="EMBL" id="CP000744">
    <property type="protein sequence ID" value="ABR80788.1"/>
    <property type="molecule type" value="Genomic_DNA"/>
</dbReference>
<dbReference type="RefSeq" id="WP_012074764.1">
    <property type="nucleotide sequence ID" value="NC_009656.1"/>
</dbReference>
<dbReference type="SMR" id="A6V1P7"/>
<dbReference type="CAZy" id="PL5">
    <property type="family name" value="Polysaccharide Lyase Family 5"/>
</dbReference>
<dbReference type="KEGG" id="pap:PSPA7_1598"/>
<dbReference type="HOGENOM" id="CLU_064286_0_0_6"/>
<dbReference type="Proteomes" id="UP000001582">
    <property type="component" value="Chromosome"/>
</dbReference>
<dbReference type="GO" id="GO:0042597">
    <property type="term" value="C:periplasmic space"/>
    <property type="evidence" value="ECO:0007669"/>
    <property type="project" value="UniProtKB-SubCell"/>
</dbReference>
<dbReference type="GO" id="GO:0045135">
    <property type="term" value="F:poly(beta-D-mannuronate) lyase activity"/>
    <property type="evidence" value="ECO:0007669"/>
    <property type="project" value="UniProtKB-UniRule"/>
</dbReference>
<dbReference type="GO" id="GO:0042122">
    <property type="term" value="P:alginic acid catabolic process"/>
    <property type="evidence" value="ECO:0007669"/>
    <property type="project" value="UniProtKB-UniRule"/>
</dbReference>
<dbReference type="CDD" id="cd00244">
    <property type="entry name" value="AlgLyase"/>
    <property type="match status" value="1"/>
</dbReference>
<dbReference type="Gene3D" id="1.50.10.100">
    <property type="entry name" value="Chondroitin AC/alginate lyase"/>
    <property type="match status" value="1"/>
</dbReference>
<dbReference type="HAMAP" id="MF_00557">
    <property type="entry name" value="Alginate_lyase"/>
    <property type="match status" value="1"/>
</dbReference>
<dbReference type="InterPro" id="IPR022859">
    <property type="entry name" value="Alginate_lyase"/>
</dbReference>
<dbReference type="InterPro" id="IPR008397">
    <property type="entry name" value="Alginate_lyase_dom"/>
</dbReference>
<dbReference type="InterPro" id="IPR008929">
    <property type="entry name" value="Chondroitin_lyas"/>
</dbReference>
<dbReference type="NCBIfam" id="NF001467">
    <property type="entry name" value="PRK00325.1-2"/>
    <property type="match status" value="1"/>
</dbReference>
<dbReference type="Pfam" id="PF05426">
    <property type="entry name" value="Alginate_lyase"/>
    <property type="match status" value="1"/>
</dbReference>
<dbReference type="SUPFAM" id="SSF48230">
    <property type="entry name" value="Chondroitin AC/alginate lyase"/>
    <property type="match status" value="1"/>
</dbReference>
<organism>
    <name type="scientific">Pseudomonas paraeruginosa (strain DSM 24068 / PA7)</name>
    <name type="common">Pseudomonas aeruginosa (strain PA7)</name>
    <dbReference type="NCBI Taxonomy" id="381754"/>
    <lineage>
        <taxon>Bacteria</taxon>
        <taxon>Pseudomonadati</taxon>
        <taxon>Pseudomonadota</taxon>
        <taxon>Gammaproteobacteria</taxon>
        <taxon>Pseudomonadales</taxon>
        <taxon>Pseudomonadaceae</taxon>
        <taxon>Pseudomonas</taxon>
        <taxon>Pseudomonas paraeruginosa</taxon>
    </lineage>
</organism>